<dbReference type="EMBL" id="DP000178">
    <property type="protein sequence ID" value="ABI75287.1"/>
    <property type="molecule type" value="Genomic_DNA"/>
</dbReference>
<dbReference type="SMR" id="Q09YJ3"/>
<dbReference type="GO" id="GO:0015629">
    <property type="term" value="C:actin cytoskeleton"/>
    <property type="evidence" value="ECO:0007669"/>
    <property type="project" value="TreeGrafter"/>
</dbReference>
<dbReference type="GO" id="GO:0005938">
    <property type="term" value="C:cell cortex"/>
    <property type="evidence" value="ECO:0007669"/>
    <property type="project" value="UniProtKB-SubCell"/>
</dbReference>
<dbReference type="GO" id="GO:0043197">
    <property type="term" value="C:dendritic spine"/>
    <property type="evidence" value="ECO:0000250"/>
    <property type="project" value="UniProtKB"/>
</dbReference>
<dbReference type="GO" id="GO:0090443">
    <property type="term" value="C:FAR/SIN/STRIPAK complex"/>
    <property type="evidence" value="ECO:0000250"/>
    <property type="project" value="UniProtKB"/>
</dbReference>
<dbReference type="GO" id="GO:0051721">
    <property type="term" value="F:protein phosphatase 2A binding"/>
    <property type="evidence" value="ECO:0007669"/>
    <property type="project" value="TreeGrafter"/>
</dbReference>
<dbReference type="Gene3D" id="1.25.40.20">
    <property type="entry name" value="Ankyrin repeat-containing domain"/>
    <property type="match status" value="1"/>
</dbReference>
<dbReference type="InterPro" id="IPR002110">
    <property type="entry name" value="Ankyrin_rpt"/>
</dbReference>
<dbReference type="InterPro" id="IPR036770">
    <property type="entry name" value="Ankyrin_rpt-contain_sf"/>
</dbReference>
<dbReference type="InterPro" id="IPR050719">
    <property type="entry name" value="Cortactin-Actin_Reg"/>
</dbReference>
<dbReference type="InterPro" id="IPR019131">
    <property type="entry name" value="Cortactin-binding_p2_N"/>
</dbReference>
<dbReference type="PANTHER" id="PTHR23166:SF9">
    <property type="entry name" value="CTTNBP2 N-TERMINAL-LIKE PROTEIN"/>
    <property type="match status" value="1"/>
</dbReference>
<dbReference type="PANTHER" id="PTHR23166">
    <property type="entry name" value="FILAMIN/GPBP-INTERACTING PROTEIN"/>
    <property type="match status" value="1"/>
</dbReference>
<dbReference type="Pfam" id="PF25408">
    <property type="entry name" value="AAA_lid_NAV1"/>
    <property type="match status" value="1"/>
</dbReference>
<dbReference type="Pfam" id="PF00023">
    <property type="entry name" value="Ank"/>
    <property type="match status" value="2"/>
</dbReference>
<dbReference type="Pfam" id="PF12796">
    <property type="entry name" value="Ank_2"/>
    <property type="match status" value="1"/>
</dbReference>
<dbReference type="Pfam" id="PF09727">
    <property type="entry name" value="CortBP2"/>
    <property type="match status" value="1"/>
</dbReference>
<dbReference type="SMART" id="SM00248">
    <property type="entry name" value="ANK"/>
    <property type="match status" value="6"/>
</dbReference>
<dbReference type="SUPFAM" id="SSF48403">
    <property type="entry name" value="Ankyrin repeat"/>
    <property type="match status" value="1"/>
</dbReference>
<dbReference type="PROSITE" id="PS50297">
    <property type="entry name" value="ANK_REP_REGION"/>
    <property type="match status" value="1"/>
</dbReference>
<dbReference type="PROSITE" id="PS50088">
    <property type="entry name" value="ANK_REPEAT"/>
    <property type="match status" value="4"/>
</dbReference>
<evidence type="ECO:0000250" key="1">
    <source>
        <dbReference type="UniProtKB" id="B9EJA2"/>
    </source>
</evidence>
<evidence type="ECO:0000250" key="2">
    <source>
        <dbReference type="UniProtKB" id="Q2IBD4"/>
    </source>
</evidence>
<evidence type="ECO:0000250" key="3">
    <source>
        <dbReference type="UniProtKB" id="Q8WZ74"/>
    </source>
</evidence>
<evidence type="ECO:0000255" key="4"/>
<evidence type="ECO:0000256" key="5">
    <source>
        <dbReference type="SAM" id="MobiDB-lite"/>
    </source>
</evidence>
<feature type="chain" id="PRO_0000260408" description="Cortactin-binding protein 2">
    <location>
        <begin position="1"/>
        <end position="1642"/>
    </location>
</feature>
<feature type="repeat" description="ANK 1">
    <location>
        <begin position="702"/>
        <end position="732"/>
    </location>
</feature>
<feature type="repeat" description="ANK 2">
    <location>
        <begin position="736"/>
        <end position="765"/>
    </location>
</feature>
<feature type="repeat" description="ANK 3">
    <location>
        <begin position="769"/>
        <end position="798"/>
    </location>
</feature>
<feature type="repeat" description="ANK 4">
    <location>
        <begin position="802"/>
        <end position="831"/>
    </location>
</feature>
<feature type="repeat" description="ANK 5">
    <location>
        <begin position="835"/>
        <end position="864"/>
    </location>
</feature>
<feature type="repeat" description="ANK 6">
    <location>
        <begin position="904"/>
        <end position="934"/>
    </location>
</feature>
<feature type="region of interest" description="Disordered" evidence="5">
    <location>
        <begin position="1"/>
        <end position="27"/>
    </location>
</feature>
<feature type="region of interest" description="Disordered" evidence="5">
    <location>
        <begin position="203"/>
        <end position="222"/>
    </location>
</feature>
<feature type="region of interest" description="Disordered" evidence="5">
    <location>
        <begin position="366"/>
        <end position="433"/>
    </location>
</feature>
<feature type="region of interest" description="Disordered" evidence="5">
    <location>
        <begin position="446"/>
        <end position="471"/>
    </location>
</feature>
<feature type="region of interest" description="Disordered" evidence="5">
    <location>
        <begin position="491"/>
        <end position="611"/>
    </location>
</feature>
<feature type="region of interest" description="Disordered" evidence="5">
    <location>
        <begin position="1441"/>
        <end position="1469"/>
    </location>
</feature>
<feature type="region of interest" description="Disordered" evidence="5">
    <location>
        <begin position="1545"/>
        <end position="1642"/>
    </location>
</feature>
<feature type="coiled-coil region" evidence="4">
    <location>
        <begin position="119"/>
        <end position="276"/>
    </location>
</feature>
<feature type="compositionally biased region" description="Polar residues" evidence="5">
    <location>
        <begin position="385"/>
        <end position="394"/>
    </location>
</feature>
<feature type="compositionally biased region" description="Low complexity" evidence="5">
    <location>
        <begin position="395"/>
        <end position="407"/>
    </location>
</feature>
<feature type="compositionally biased region" description="Pro residues" evidence="5">
    <location>
        <begin position="497"/>
        <end position="506"/>
    </location>
</feature>
<feature type="compositionally biased region" description="Polar residues" evidence="5">
    <location>
        <begin position="576"/>
        <end position="586"/>
    </location>
</feature>
<feature type="compositionally biased region" description="Polar residues" evidence="5">
    <location>
        <begin position="1552"/>
        <end position="1563"/>
    </location>
</feature>
<feature type="compositionally biased region" description="Polar residues" evidence="5">
    <location>
        <begin position="1571"/>
        <end position="1588"/>
    </location>
</feature>
<feature type="compositionally biased region" description="Low complexity" evidence="5">
    <location>
        <begin position="1613"/>
        <end position="1627"/>
    </location>
</feature>
<feature type="modified residue" description="Asymmetric dimethylarginine" evidence="1">
    <location>
        <position position="491"/>
    </location>
</feature>
<feature type="modified residue" description="Phosphoserine" evidence="3">
    <location>
        <position position="1513"/>
    </location>
</feature>
<sequence length="1642" mass="178144">MATDGASCEPDFSRAPEDAAGAPAEAAKKEFDVDTLSKSELRMLLSVMEGELEARDLVIEALRARRKEVFIQERYGRFNLNDPFLALQRDYEAGASDKEKKPVCTNPLSILEAVMAHCRKMQERMSTQLAAAESRQKKLEMEKLQLQALEQEHKKLAARLEEERGKNKHVVLMLVKECKQLSGKVLEEAQKLEEVMAKLEEEKKKTSALEEELATEKRRSTEMEAQMEKQLSEFDTEREQLRAKLHREEAHTADLKEEIDKMKKMIEQLKRGTDSKPGLSLPRKTKDRRSISISVATEGPMTRSVACQTDLVMESAEPVKKLPLTVPVKPAAGSPPVAAGAKGNACASAAAVRPGVERQVSHGDLIGASLPAAPPPSANRIEENGPSTGSTADLTSSPTPVPSTVSPASGHTPAPPPHSLHSPCANAPLHPGLNPRIQAARFRFQGSNANDPDQNGNTTQSPPSRDVSPTSRDNLVAKQLARNTVTQALSRFTSPPAGAPPRPGAPPTGDVGTYPPVGRTSLKTPGGARVDRGNPPPIPPKKPGLSQTPSPPHPQLKVIMDSSRASSTGIKADNKTVASPPSTLPQGNRVMNEENLSKSSSPQLPPKPSIDLTVAPAGCAVSALATSQVGAWPAETPGLNQSACSERSLVIPTTTASSSSIHPVNASSRRAGASDSLLVTASGWSPSLTPLLMSGGPAPLAGRPTLLQQAAAQGNVTLLSMLLNEEGLDINYSCEDGHSALYSAAKNGHTDCVRLLLNAEAQVNAADKNGFTPLCAAAAQGHFKCVELLIAYDANINHAADGGQTPLYLACKNGNKECIKLLLEAGTDRSVKTRDGWTPIHAAVDTGNVDSLKLLMYHRAPAHGNKLREEPGLAIFDLDQEEERHEGTSKPVVPADLINHADSEGWTAAHIAASKGFKNCLEVLCRHGGLEPERRDKCNRTAHDVATDDCKHLLENLNALKIPLRISVGEIEPGNYGADDFECENTICALNIRKQTSWDDFSKAVSQALTNHFQAISSDGWWSLEDMTFNSTTDSSIGLSASSVRSITLGTVPWSAGQSFAQSPWDFVRTNKAEQVTVLLSGPQEGCLSSVTYASMIPLQMLQNYLRLVEQYHNVIFHGPEGSLQDYITHQLALCLKHRQMTAGFPCEIVRAEVDADFSKEQLVDLFISSACLIPVKQSPANKKIIVILENLEKSSLSELLGDFLGPLENHSTESPCTFQKGNGTSECYYFHENCFLMGTIAKACLQGSDLLVQQHFRWVQLRWDGEPMQGLLRRFLRRKVVNKFRGQVPSPCDPVCKTVDWALAVWRQLNSCLARLGTPEALLGPKYFLSCPVIPGHAQATVKWMSKLWNAVIAPRVQEAILSRASVKRQPGLGQTTKNPSQGQQAVVRAALSILLNKAVLHGCPLQRAELDQHTADFKGGSFPLSIVSSYSSCNKKKESGAWRKVSTSPRKKSGRFSSPTWNKPDLSEEGIKSNTILQLNCNRNASLSNQKSLENDLSLTLNLDQRLSLGSDDEADLVKELQSMCSSKSESDISKIADSRDDLRRFDSSGNNPVFSATVNNPRMPVSQKEVSPLSSHQTTECSNSKSKTELGVSRVKSFLPVPRSKVTQCSQNTKRSSSSSNTRQIEINNNSRDLEPTQK</sequence>
<gene>
    <name type="primary">CTTNBP2</name>
    <name type="synonym">CORTBP2</name>
</gene>
<name>CTTB2_MUNMU</name>
<proteinExistence type="inferred from homology"/>
<comment type="function">
    <text evidence="2">Regulates the dendritic spine distribution of CTTN/cortactin in hippocampal neurons, and thus controls dendritic spinogenesis and dendritic spine maintenance. Associates with the striatin-interacting phosphatase and kinase (STRIPAK) core complex to regulate dendritic spine distribution of the STRIPAK complex in hippocampal neurons.</text>
</comment>
<comment type="subunit">
    <text evidence="2">Interacts with CTTN/cortactin SH3 domain. Interacts with STRN, STRN4/zinedin and MOB4/phocein; this interactions mediate the association with the STRIPAK core complex and may regulate dendritic spine distribution of the STRIPAK complex in hippocampal neurons. Activation of glutamate receptors weakens the interaction with STRN and STRN4.</text>
</comment>
<comment type="subcellular location">
    <subcellularLocation>
        <location evidence="1">Cytoplasm</location>
        <location evidence="1">Cell cortex</location>
    </subcellularLocation>
    <subcellularLocation>
        <location evidence="2">Cell projection</location>
        <location evidence="2">Dendritic spine</location>
    </subcellularLocation>
    <text evidence="2">Remains associated with dendritic spines even after glutamate stimulation.</text>
</comment>
<reference key="1">
    <citation type="submission" date="2006-09" db="EMBL/GenBank/DDBJ databases">
        <title>NISC comparative sequencing initiative.</title>
        <authorList>
            <person name="Antonellis A."/>
            <person name="Ayele K."/>
            <person name="Benjamin B."/>
            <person name="Blakesley R.W."/>
            <person name="Boakye A."/>
            <person name="Bouffard G.G."/>
            <person name="Brinkley C."/>
            <person name="Brooks S."/>
            <person name="Chu G."/>
            <person name="Coleman H."/>
            <person name="Engle J."/>
            <person name="Gestole M."/>
            <person name="Greene A."/>
            <person name="Guan X."/>
            <person name="Gupta J."/>
            <person name="Haghighi P."/>
            <person name="Han J."/>
            <person name="Hansen N."/>
            <person name="Ho S.-L."/>
            <person name="Hu P."/>
            <person name="Hunter G."/>
            <person name="Hurle B."/>
            <person name="Idol J.R."/>
            <person name="Kwong P."/>
            <person name="Laric P."/>
            <person name="Larson S."/>
            <person name="Lee-Lin S.-Q."/>
            <person name="Legaspi R."/>
            <person name="Madden M."/>
            <person name="Maduro Q.L."/>
            <person name="Maduro V.B."/>
            <person name="Margulies E.H."/>
            <person name="Masiello C."/>
            <person name="Maskeri B."/>
            <person name="McDowell J."/>
            <person name="Mojidi H.A."/>
            <person name="Mullikin J.C."/>
            <person name="Oestreicher J.S."/>
            <person name="Park M."/>
            <person name="Portnoy M.E."/>
            <person name="Prasad A."/>
            <person name="Puri O."/>
            <person name="Reddix-Dugue N."/>
            <person name="Schandler K."/>
            <person name="Schueler M.G."/>
            <person name="Sison C."/>
            <person name="Stantripop S."/>
            <person name="Stephen E."/>
            <person name="Taye A."/>
            <person name="Thomas J.W."/>
            <person name="Thomas P.J."/>
            <person name="Tsipouri V."/>
            <person name="Ung L."/>
            <person name="Vogt J.L."/>
            <person name="Wetherby K.D."/>
            <person name="Young A."/>
            <person name="Green E.D."/>
        </authorList>
    </citation>
    <scope>NUCLEOTIDE SEQUENCE [LARGE SCALE GENOMIC DNA]</scope>
</reference>
<protein>
    <recommendedName>
        <fullName>Cortactin-binding protein 2</fullName>
        <shortName>CortBP2</shortName>
    </recommendedName>
</protein>
<accession>Q09YJ3</accession>
<organism>
    <name type="scientific">Muntiacus muntjak</name>
    <name type="common">Barking deer</name>
    <name type="synonym">Indian muntjac</name>
    <dbReference type="NCBI Taxonomy" id="9888"/>
    <lineage>
        <taxon>Eukaryota</taxon>
        <taxon>Metazoa</taxon>
        <taxon>Chordata</taxon>
        <taxon>Craniata</taxon>
        <taxon>Vertebrata</taxon>
        <taxon>Euteleostomi</taxon>
        <taxon>Mammalia</taxon>
        <taxon>Eutheria</taxon>
        <taxon>Laurasiatheria</taxon>
        <taxon>Artiodactyla</taxon>
        <taxon>Ruminantia</taxon>
        <taxon>Pecora</taxon>
        <taxon>Cervidae</taxon>
        <taxon>Muntiacinae</taxon>
        <taxon>Muntiacus</taxon>
    </lineage>
</organism>
<keyword id="KW-0040">ANK repeat</keyword>
<keyword id="KW-0966">Cell projection</keyword>
<keyword id="KW-0175">Coiled coil</keyword>
<keyword id="KW-0963">Cytoplasm</keyword>
<keyword id="KW-0488">Methylation</keyword>
<keyword id="KW-0597">Phosphoprotein</keyword>
<keyword id="KW-0677">Repeat</keyword>
<keyword id="KW-0770">Synapse</keyword>